<feature type="chain" id="PRO_0000313075" description="Probable [Fe-S]-dependent transcriptional repressor">
    <location>
        <begin position="1"/>
        <end position="85"/>
    </location>
</feature>
<feature type="binding site" evidence="1">
    <location>
        <position position="56"/>
    </location>
    <ligand>
        <name>iron-sulfur cluster</name>
        <dbReference type="ChEBI" id="CHEBI:30408"/>
    </ligand>
</feature>
<feature type="binding site" evidence="1">
    <location>
        <position position="61"/>
    </location>
    <ligand>
        <name>iron-sulfur cluster</name>
        <dbReference type="ChEBI" id="CHEBI:30408"/>
    </ligand>
</feature>
<feature type="binding site" evidence="1">
    <location>
        <position position="64"/>
    </location>
    <ligand>
        <name>iron-sulfur cluster</name>
        <dbReference type="ChEBI" id="CHEBI:30408"/>
    </ligand>
</feature>
<feature type="binding site" evidence="1">
    <location>
        <position position="71"/>
    </location>
    <ligand>
        <name>iron-sulfur cluster</name>
        <dbReference type="ChEBI" id="CHEBI:30408"/>
    </ligand>
</feature>
<sequence>MASLLQLRDAIALNGSAEASQLSRQLAIPLPLVNAMLEKLTAMGKIERIELDHSGCLTGSCKSCPEGHQHCNTVIYQLKEPHAHQ</sequence>
<proteinExistence type="inferred from homology"/>
<gene>
    <name evidence="1" type="primary">feoC</name>
    <name type="ordered locus">YPA_3338</name>
</gene>
<keyword id="KW-0238">DNA-binding</keyword>
<keyword id="KW-0408">Iron</keyword>
<keyword id="KW-0411">Iron-sulfur</keyword>
<keyword id="KW-0479">Metal-binding</keyword>
<keyword id="KW-0678">Repressor</keyword>
<keyword id="KW-0804">Transcription</keyword>
<keyword id="KW-0805">Transcription regulation</keyword>
<accession>Q1C2M2</accession>
<name>FEOC_YERPA</name>
<protein>
    <recommendedName>
        <fullName evidence="1">Probable [Fe-S]-dependent transcriptional repressor</fullName>
    </recommendedName>
</protein>
<reference key="1">
    <citation type="journal article" date="2006" name="J. Bacteriol.">
        <title>Complete genome sequence of Yersinia pestis strains Antiqua and Nepal516: evidence of gene reduction in an emerging pathogen.</title>
        <authorList>
            <person name="Chain P.S.G."/>
            <person name="Hu P."/>
            <person name="Malfatti S.A."/>
            <person name="Radnedge L."/>
            <person name="Larimer F."/>
            <person name="Vergez L.M."/>
            <person name="Worsham P."/>
            <person name="Chu M.C."/>
            <person name="Andersen G.L."/>
        </authorList>
    </citation>
    <scope>NUCLEOTIDE SEQUENCE [LARGE SCALE GENOMIC DNA]</scope>
    <source>
        <strain>Antiqua</strain>
    </source>
</reference>
<dbReference type="EMBL" id="CP000308">
    <property type="protein sequence ID" value="ABG15300.1"/>
    <property type="molecule type" value="Genomic_DNA"/>
</dbReference>
<dbReference type="RefSeq" id="WP_002208920.1">
    <property type="nucleotide sequence ID" value="NZ_CP009906.1"/>
</dbReference>
<dbReference type="SMR" id="Q1C2M2"/>
<dbReference type="KEGG" id="ypa:YPA_3338"/>
<dbReference type="Proteomes" id="UP000001971">
    <property type="component" value="Chromosome"/>
</dbReference>
<dbReference type="GO" id="GO:0003677">
    <property type="term" value="F:DNA binding"/>
    <property type="evidence" value="ECO:0007669"/>
    <property type="project" value="UniProtKB-KW"/>
</dbReference>
<dbReference type="GO" id="GO:0005506">
    <property type="term" value="F:iron ion binding"/>
    <property type="evidence" value="ECO:0007669"/>
    <property type="project" value="UniProtKB-UniRule"/>
</dbReference>
<dbReference type="GO" id="GO:0051536">
    <property type="term" value="F:iron-sulfur cluster binding"/>
    <property type="evidence" value="ECO:0007669"/>
    <property type="project" value="UniProtKB-KW"/>
</dbReference>
<dbReference type="Gene3D" id="1.10.10.10">
    <property type="entry name" value="Winged helix-like DNA-binding domain superfamily/Winged helix DNA-binding domain"/>
    <property type="match status" value="1"/>
</dbReference>
<dbReference type="HAMAP" id="MF_01586">
    <property type="entry name" value="FeoC"/>
    <property type="match status" value="1"/>
</dbReference>
<dbReference type="InterPro" id="IPR023732">
    <property type="entry name" value="FeoC"/>
</dbReference>
<dbReference type="InterPro" id="IPR015102">
    <property type="entry name" value="Tscrpt_reg_HTH_FeoC"/>
</dbReference>
<dbReference type="InterPro" id="IPR036388">
    <property type="entry name" value="WH-like_DNA-bd_sf"/>
</dbReference>
<dbReference type="InterPro" id="IPR036390">
    <property type="entry name" value="WH_DNA-bd_sf"/>
</dbReference>
<dbReference type="Pfam" id="PF09012">
    <property type="entry name" value="FeoC"/>
    <property type="match status" value="1"/>
</dbReference>
<dbReference type="SUPFAM" id="SSF46785">
    <property type="entry name" value="Winged helix' DNA-binding domain"/>
    <property type="match status" value="1"/>
</dbReference>
<evidence type="ECO:0000255" key="1">
    <source>
        <dbReference type="HAMAP-Rule" id="MF_01586"/>
    </source>
</evidence>
<comment type="function">
    <text evidence="1">May function as a transcriptional regulator that controls feoABC expression.</text>
</comment>
<comment type="similarity">
    <text evidence="1">Belongs to the FeoC family.</text>
</comment>
<organism>
    <name type="scientific">Yersinia pestis bv. Antiqua (strain Antiqua)</name>
    <dbReference type="NCBI Taxonomy" id="360102"/>
    <lineage>
        <taxon>Bacteria</taxon>
        <taxon>Pseudomonadati</taxon>
        <taxon>Pseudomonadota</taxon>
        <taxon>Gammaproteobacteria</taxon>
        <taxon>Enterobacterales</taxon>
        <taxon>Yersiniaceae</taxon>
        <taxon>Yersinia</taxon>
    </lineage>
</organism>